<evidence type="ECO:0000250" key="1"/>
<evidence type="ECO:0000255" key="2">
    <source>
        <dbReference type="HAMAP-Rule" id="MF_01702"/>
    </source>
</evidence>
<reference key="1">
    <citation type="journal article" date="2002" name="Proc. Natl. Acad. Sci. U.S.A.">
        <title>Extensive mosaic structure revealed by the complete genome sequence of uropathogenic Escherichia coli.</title>
        <authorList>
            <person name="Welch R.A."/>
            <person name="Burland V."/>
            <person name="Plunkett G. III"/>
            <person name="Redford P."/>
            <person name="Roesch P."/>
            <person name="Rasko D."/>
            <person name="Buckles E.L."/>
            <person name="Liou S.-R."/>
            <person name="Boutin A."/>
            <person name="Hackett J."/>
            <person name="Stroud D."/>
            <person name="Mayhew G.F."/>
            <person name="Rose D.J."/>
            <person name="Zhou S."/>
            <person name="Schwartz D.C."/>
            <person name="Perna N.T."/>
            <person name="Mobley H.L.T."/>
            <person name="Donnenberg M.S."/>
            <person name="Blattner F.R."/>
        </authorList>
    </citation>
    <scope>NUCLEOTIDE SEQUENCE [LARGE SCALE GENOMIC DNA]</scope>
    <source>
        <strain>CFT073 / ATCC 700928 / UPEC</strain>
    </source>
</reference>
<accession>P0AAH1</accession>
<accession>P07655</accession>
<proteinExistence type="inferred from homology"/>
<dbReference type="EC" id="7.3.2.1" evidence="2"/>
<dbReference type="EMBL" id="AE014075">
    <property type="protein sequence ID" value="AAN83081.1"/>
    <property type="molecule type" value="Genomic_DNA"/>
</dbReference>
<dbReference type="RefSeq" id="WP_000063125.1">
    <property type="nucleotide sequence ID" value="NZ_CP051263.1"/>
</dbReference>
<dbReference type="SMR" id="P0AAH1"/>
<dbReference type="STRING" id="199310.c4649"/>
<dbReference type="GeneID" id="93778212"/>
<dbReference type="KEGG" id="ecc:c4649"/>
<dbReference type="eggNOG" id="COG1117">
    <property type="taxonomic scope" value="Bacteria"/>
</dbReference>
<dbReference type="HOGENOM" id="CLU_000604_1_22_6"/>
<dbReference type="BioCyc" id="ECOL199310:C4649-MONOMER"/>
<dbReference type="Proteomes" id="UP000001410">
    <property type="component" value="Chromosome"/>
</dbReference>
<dbReference type="GO" id="GO:0005886">
    <property type="term" value="C:plasma membrane"/>
    <property type="evidence" value="ECO:0007669"/>
    <property type="project" value="UniProtKB-SubCell"/>
</dbReference>
<dbReference type="GO" id="GO:0005524">
    <property type="term" value="F:ATP binding"/>
    <property type="evidence" value="ECO:0007669"/>
    <property type="project" value="UniProtKB-KW"/>
</dbReference>
<dbReference type="GO" id="GO:0016887">
    <property type="term" value="F:ATP hydrolysis activity"/>
    <property type="evidence" value="ECO:0007669"/>
    <property type="project" value="InterPro"/>
</dbReference>
<dbReference type="GO" id="GO:0015415">
    <property type="term" value="F:ATPase-coupled phosphate ion transmembrane transporter activity"/>
    <property type="evidence" value="ECO:0007669"/>
    <property type="project" value="UniProtKB-EC"/>
</dbReference>
<dbReference type="GO" id="GO:0035435">
    <property type="term" value="P:phosphate ion transmembrane transport"/>
    <property type="evidence" value="ECO:0007669"/>
    <property type="project" value="InterPro"/>
</dbReference>
<dbReference type="CDD" id="cd03260">
    <property type="entry name" value="ABC_PstB_phosphate_transporter"/>
    <property type="match status" value="1"/>
</dbReference>
<dbReference type="FunFam" id="3.40.50.300:FF:000132">
    <property type="entry name" value="Phosphate import ATP-binding protein PstB"/>
    <property type="match status" value="1"/>
</dbReference>
<dbReference type="Gene3D" id="3.40.50.300">
    <property type="entry name" value="P-loop containing nucleotide triphosphate hydrolases"/>
    <property type="match status" value="1"/>
</dbReference>
<dbReference type="InterPro" id="IPR003593">
    <property type="entry name" value="AAA+_ATPase"/>
</dbReference>
<dbReference type="InterPro" id="IPR003439">
    <property type="entry name" value="ABC_transporter-like_ATP-bd"/>
</dbReference>
<dbReference type="InterPro" id="IPR017871">
    <property type="entry name" value="ABC_transporter-like_CS"/>
</dbReference>
<dbReference type="InterPro" id="IPR027417">
    <property type="entry name" value="P-loop_NTPase"/>
</dbReference>
<dbReference type="InterPro" id="IPR005670">
    <property type="entry name" value="PstB-like"/>
</dbReference>
<dbReference type="NCBIfam" id="TIGR00972">
    <property type="entry name" value="3a0107s01c2"/>
    <property type="match status" value="1"/>
</dbReference>
<dbReference type="PANTHER" id="PTHR43423">
    <property type="entry name" value="ABC TRANSPORTER I FAMILY MEMBER 17"/>
    <property type="match status" value="1"/>
</dbReference>
<dbReference type="PANTHER" id="PTHR43423:SF3">
    <property type="entry name" value="PHOSPHATE IMPORT ATP-BINDING PROTEIN PSTB"/>
    <property type="match status" value="1"/>
</dbReference>
<dbReference type="Pfam" id="PF00005">
    <property type="entry name" value="ABC_tran"/>
    <property type="match status" value="1"/>
</dbReference>
<dbReference type="SMART" id="SM00382">
    <property type="entry name" value="AAA"/>
    <property type="match status" value="1"/>
</dbReference>
<dbReference type="SUPFAM" id="SSF52540">
    <property type="entry name" value="P-loop containing nucleoside triphosphate hydrolases"/>
    <property type="match status" value="1"/>
</dbReference>
<dbReference type="PROSITE" id="PS00211">
    <property type="entry name" value="ABC_TRANSPORTER_1"/>
    <property type="match status" value="1"/>
</dbReference>
<dbReference type="PROSITE" id="PS50893">
    <property type="entry name" value="ABC_TRANSPORTER_2"/>
    <property type="match status" value="1"/>
</dbReference>
<dbReference type="PROSITE" id="PS51238">
    <property type="entry name" value="PSTB"/>
    <property type="match status" value="1"/>
</dbReference>
<name>PSTB_ECOL6</name>
<protein>
    <recommendedName>
        <fullName evidence="2">Phosphate import ATP-binding protein PstB</fullName>
        <ecNumber evidence="2">7.3.2.1</ecNumber>
    </recommendedName>
    <alternativeName>
        <fullName evidence="2">ABC phosphate transporter</fullName>
    </alternativeName>
    <alternativeName>
        <fullName evidence="2">Phosphate-transporting ATPase</fullName>
    </alternativeName>
</protein>
<keyword id="KW-0067">ATP-binding</keyword>
<keyword id="KW-0997">Cell inner membrane</keyword>
<keyword id="KW-1003">Cell membrane</keyword>
<keyword id="KW-0472">Membrane</keyword>
<keyword id="KW-0547">Nucleotide-binding</keyword>
<keyword id="KW-0592">Phosphate transport</keyword>
<keyword id="KW-1185">Reference proteome</keyword>
<keyword id="KW-1278">Translocase</keyword>
<keyword id="KW-0813">Transport</keyword>
<sequence>MSMVETAPSKIQVRNLNFYYGKFHALKNINLDIAKNQVTAFIGPSGCGKSTLLRTFNKMFELYPEQRAEGEILLDGDNILTNSQDIALLRAKVGMVFQKPTPFPMSIYDNIAFGVRLFEKLSRADMDERVQWALTKAALWNETKDKLHQSGYSLSGGQQQRLCIARGIAIRPEVLLLDEPCSALDPISTGRIEELITELKQDYTVVIVTHNMQQAARCSDHTAFMYLGELIEFSNTDDLFTKPAKKQTEDYITGRYG</sequence>
<gene>
    <name evidence="2" type="primary">pstB</name>
    <name type="ordered locus">c4649</name>
</gene>
<feature type="initiator methionine" description="Removed" evidence="1">
    <location>
        <position position="1"/>
    </location>
</feature>
<feature type="chain" id="PRO_0000092812" description="Phosphate import ATP-binding protein PstB">
    <location>
        <begin position="2"/>
        <end position="257"/>
    </location>
</feature>
<feature type="domain" description="ABC transporter" evidence="2">
    <location>
        <begin position="11"/>
        <end position="252"/>
    </location>
</feature>
<feature type="binding site" evidence="2">
    <location>
        <begin position="43"/>
        <end position="50"/>
    </location>
    <ligand>
        <name>ATP</name>
        <dbReference type="ChEBI" id="CHEBI:30616"/>
    </ligand>
</feature>
<comment type="function">
    <text evidence="2">Part of the ABC transporter complex PstSACB involved in phosphate import. Responsible for energy coupling to the transport system.</text>
</comment>
<comment type="catalytic activity">
    <reaction evidence="2">
        <text>phosphate(out) + ATP + H2O = ADP + 2 phosphate(in) + H(+)</text>
        <dbReference type="Rhea" id="RHEA:24440"/>
        <dbReference type="ChEBI" id="CHEBI:15377"/>
        <dbReference type="ChEBI" id="CHEBI:15378"/>
        <dbReference type="ChEBI" id="CHEBI:30616"/>
        <dbReference type="ChEBI" id="CHEBI:43474"/>
        <dbReference type="ChEBI" id="CHEBI:456216"/>
        <dbReference type="EC" id="7.3.2.1"/>
    </reaction>
</comment>
<comment type="subunit">
    <text evidence="2">The complex is composed of two ATP-binding proteins (PstB), two transmembrane proteins (PstC and PstA) and a solute-binding protein (PstS).</text>
</comment>
<comment type="subcellular location">
    <subcellularLocation>
        <location evidence="2">Cell inner membrane</location>
        <topology evidence="2">Peripheral membrane protein</topology>
    </subcellularLocation>
</comment>
<comment type="similarity">
    <text evidence="2">Belongs to the ABC transporter superfamily. Phosphate importer (TC 3.A.1.7) family.</text>
</comment>
<organism>
    <name type="scientific">Escherichia coli O6:H1 (strain CFT073 / ATCC 700928 / UPEC)</name>
    <dbReference type="NCBI Taxonomy" id="199310"/>
    <lineage>
        <taxon>Bacteria</taxon>
        <taxon>Pseudomonadati</taxon>
        <taxon>Pseudomonadota</taxon>
        <taxon>Gammaproteobacteria</taxon>
        <taxon>Enterobacterales</taxon>
        <taxon>Enterobacteriaceae</taxon>
        <taxon>Escherichia</taxon>
    </lineage>
</organism>